<accession>B7MTM4</accession>
<name>ACP_ECO81</name>
<organism>
    <name type="scientific">Escherichia coli O81 (strain ED1a)</name>
    <dbReference type="NCBI Taxonomy" id="585397"/>
    <lineage>
        <taxon>Bacteria</taxon>
        <taxon>Pseudomonadati</taxon>
        <taxon>Pseudomonadota</taxon>
        <taxon>Gammaproteobacteria</taxon>
        <taxon>Enterobacterales</taxon>
        <taxon>Enterobacteriaceae</taxon>
        <taxon>Escherichia</taxon>
    </lineage>
</organism>
<reference key="1">
    <citation type="journal article" date="2009" name="PLoS Genet.">
        <title>Organised genome dynamics in the Escherichia coli species results in highly diverse adaptive paths.</title>
        <authorList>
            <person name="Touchon M."/>
            <person name="Hoede C."/>
            <person name="Tenaillon O."/>
            <person name="Barbe V."/>
            <person name="Baeriswyl S."/>
            <person name="Bidet P."/>
            <person name="Bingen E."/>
            <person name="Bonacorsi S."/>
            <person name="Bouchier C."/>
            <person name="Bouvet O."/>
            <person name="Calteau A."/>
            <person name="Chiapello H."/>
            <person name="Clermont O."/>
            <person name="Cruveiller S."/>
            <person name="Danchin A."/>
            <person name="Diard M."/>
            <person name="Dossat C."/>
            <person name="Karoui M.E."/>
            <person name="Frapy E."/>
            <person name="Garry L."/>
            <person name="Ghigo J.M."/>
            <person name="Gilles A.M."/>
            <person name="Johnson J."/>
            <person name="Le Bouguenec C."/>
            <person name="Lescat M."/>
            <person name="Mangenot S."/>
            <person name="Martinez-Jehanne V."/>
            <person name="Matic I."/>
            <person name="Nassif X."/>
            <person name="Oztas S."/>
            <person name="Petit M.A."/>
            <person name="Pichon C."/>
            <person name="Rouy Z."/>
            <person name="Ruf C.S."/>
            <person name="Schneider D."/>
            <person name="Tourret J."/>
            <person name="Vacherie B."/>
            <person name="Vallenet D."/>
            <person name="Medigue C."/>
            <person name="Rocha E.P.C."/>
            <person name="Denamur E."/>
        </authorList>
    </citation>
    <scope>NUCLEOTIDE SEQUENCE [LARGE SCALE GENOMIC DNA]</scope>
    <source>
        <strain>ED1a</strain>
    </source>
</reference>
<gene>
    <name evidence="1" type="primary">acpP</name>
    <name type="ordered locus">ECED1_1237</name>
</gene>
<protein>
    <recommendedName>
        <fullName evidence="1">Acyl carrier protein</fullName>
        <shortName evidence="1">ACP</shortName>
    </recommendedName>
</protein>
<comment type="function">
    <text evidence="1">Carrier of the growing fatty acid chain in fatty acid biosynthesis.</text>
</comment>
<comment type="pathway">
    <text evidence="1">Lipid metabolism; fatty acid biosynthesis.</text>
</comment>
<comment type="subcellular location">
    <subcellularLocation>
        <location evidence="1">Cytoplasm</location>
    </subcellularLocation>
</comment>
<comment type="PTM">
    <text evidence="1">4'-phosphopantetheine is transferred from CoA to a specific serine of apo-ACP by AcpS. This modification is essential for activity because fatty acids are bound in thioester linkage to the sulfhydryl of the prosthetic group.</text>
</comment>
<comment type="similarity">
    <text evidence="1">Belongs to the acyl carrier protein (ACP) family.</text>
</comment>
<proteinExistence type="inferred from homology"/>
<dbReference type="EMBL" id="CU928162">
    <property type="protein sequence ID" value="CAR07438.1"/>
    <property type="molecule type" value="Genomic_DNA"/>
</dbReference>
<dbReference type="RefSeq" id="WP_000103754.1">
    <property type="nucleotide sequence ID" value="NC_011745.1"/>
</dbReference>
<dbReference type="SMR" id="B7MTM4"/>
<dbReference type="GeneID" id="98387866"/>
<dbReference type="KEGG" id="ecq:ECED1_1237"/>
<dbReference type="HOGENOM" id="CLU_108696_5_1_6"/>
<dbReference type="UniPathway" id="UPA00094"/>
<dbReference type="Proteomes" id="UP000000748">
    <property type="component" value="Chromosome"/>
</dbReference>
<dbReference type="GO" id="GO:0005829">
    <property type="term" value="C:cytosol"/>
    <property type="evidence" value="ECO:0007669"/>
    <property type="project" value="TreeGrafter"/>
</dbReference>
<dbReference type="GO" id="GO:0016020">
    <property type="term" value="C:membrane"/>
    <property type="evidence" value="ECO:0007669"/>
    <property type="project" value="GOC"/>
</dbReference>
<dbReference type="GO" id="GO:0000035">
    <property type="term" value="F:acyl binding"/>
    <property type="evidence" value="ECO:0007669"/>
    <property type="project" value="TreeGrafter"/>
</dbReference>
<dbReference type="GO" id="GO:0000036">
    <property type="term" value="F:acyl carrier activity"/>
    <property type="evidence" value="ECO:0007669"/>
    <property type="project" value="UniProtKB-UniRule"/>
</dbReference>
<dbReference type="GO" id="GO:0009245">
    <property type="term" value="P:lipid A biosynthetic process"/>
    <property type="evidence" value="ECO:0007669"/>
    <property type="project" value="TreeGrafter"/>
</dbReference>
<dbReference type="FunFam" id="1.10.1200.10:FF:000001">
    <property type="entry name" value="Acyl carrier protein"/>
    <property type="match status" value="1"/>
</dbReference>
<dbReference type="Gene3D" id="1.10.1200.10">
    <property type="entry name" value="ACP-like"/>
    <property type="match status" value="1"/>
</dbReference>
<dbReference type="HAMAP" id="MF_01217">
    <property type="entry name" value="Acyl_carrier"/>
    <property type="match status" value="1"/>
</dbReference>
<dbReference type="InterPro" id="IPR003231">
    <property type="entry name" value="ACP"/>
</dbReference>
<dbReference type="InterPro" id="IPR036736">
    <property type="entry name" value="ACP-like_sf"/>
</dbReference>
<dbReference type="InterPro" id="IPR009081">
    <property type="entry name" value="PP-bd_ACP"/>
</dbReference>
<dbReference type="InterPro" id="IPR006162">
    <property type="entry name" value="Ppantetheine_attach_site"/>
</dbReference>
<dbReference type="NCBIfam" id="TIGR00517">
    <property type="entry name" value="acyl_carrier"/>
    <property type="match status" value="1"/>
</dbReference>
<dbReference type="NCBIfam" id="NF002148">
    <property type="entry name" value="PRK00982.1-2"/>
    <property type="match status" value="1"/>
</dbReference>
<dbReference type="NCBIfam" id="NF002149">
    <property type="entry name" value="PRK00982.1-3"/>
    <property type="match status" value="1"/>
</dbReference>
<dbReference type="NCBIfam" id="NF002150">
    <property type="entry name" value="PRK00982.1-4"/>
    <property type="match status" value="1"/>
</dbReference>
<dbReference type="NCBIfam" id="NF002151">
    <property type="entry name" value="PRK00982.1-5"/>
    <property type="match status" value="1"/>
</dbReference>
<dbReference type="PANTHER" id="PTHR20863">
    <property type="entry name" value="ACYL CARRIER PROTEIN"/>
    <property type="match status" value="1"/>
</dbReference>
<dbReference type="PANTHER" id="PTHR20863:SF76">
    <property type="entry name" value="CARRIER DOMAIN-CONTAINING PROTEIN"/>
    <property type="match status" value="1"/>
</dbReference>
<dbReference type="Pfam" id="PF00550">
    <property type="entry name" value="PP-binding"/>
    <property type="match status" value="1"/>
</dbReference>
<dbReference type="SUPFAM" id="SSF47336">
    <property type="entry name" value="ACP-like"/>
    <property type="match status" value="1"/>
</dbReference>
<dbReference type="PROSITE" id="PS50075">
    <property type="entry name" value="CARRIER"/>
    <property type="match status" value="1"/>
</dbReference>
<dbReference type="PROSITE" id="PS00012">
    <property type="entry name" value="PHOSPHOPANTETHEINE"/>
    <property type="match status" value="1"/>
</dbReference>
<evidence type="ECO:0000255" key="1">
    <source>
        <dbReference type="HAMAP-Rule" id="MF_01217"/>
    </source>
</evidence>
<evidence type="ECO:0000255" key="2">
    <source>
        <dbReference type="PROSITE-ProRule" id="PRU00258"/>
    </source>
</evidence>
<keyword id="KW-0963">Cytoplasm</keyword>
<keyword id="KW-0275">Fatty acid biosynthesis</keyword>
<keyword id="KW-0276">Fatty acid metabolism</keyword>
<keyword id="KW-0444">Lipid biosynthesis</keyword>
<keyword id="KW-0443">Lipid metabolism</keyword>
<keyword id="KW-0596">Phosphopantetheine</keyword>
<keyword id="KW-0597">Phosphoprotein</keyword>
<feature type="chain" id="PRO_1000164787" description="Acyl carrier protein">
    <location>
        <begin position="1"/>
        <end position="78"/>
    </location>
</feature>
<feature type="domain" description="Carrier" evidence="2">
    <location>
        <begin position="2"/>
        <end position="77"/>
    </location>
</feature>
<feature type="modified residue" description="O-(pantetheine 4'-phosphoryl)serine" evidence="2">
    <location>
        <position position="37"/>
    </location>
</feature>
<sequence>MSTIEERVKKIIGEQLGVKQEEVTNNASFVEDLGADSLDTVELVMALEEEFDTEIPDEEAEKITTVQAAIDYINGHQA</sequence>